<protein>
    <recommendedName>
        <fullName>Pentatricopeptide repeat-containing protein At1g71060, mitochondrial</fullName>
    </recommendedName>
</protein>
<keyword id="KW-0496">Mitochondrion</keyword>
<keyword id="KW-1185">Reference proteome</keyword>
<keyword id="KW-0677">Repeat</keyword>
<keyword id="KW-0809">Transit peptide</keyword>
<dbReference type="EMBL" id="AC016972">
    <property type="protein sequence ID" value="AAG51696.1"/>
    <property type="molecule type" value="Genomic_DNA"/>
</dbReference>
<dbReference type="EMBL" id="CP002684">
    <property type="protein sequence ID" value="AEE35157.1"/>
    <property type="molecule type" value="Genomic_DNA"/>
</dbReference>
<dbReference type="PIR" id="A96735">
    <property type="entry name" value="A96735"/>
</dbReference>
<dbReference type="RefSeq" id="NP_177262.1">
    <property type="nucleotide sequence ID" value="NM_105775.1"/>
</dbReference>
<dbReference type="SMR" id="Q9C9A2"/>
<dbReference type="FunCoup" id="Q9C9A2">
    <property type="interactions" value="177"/>
</dbReference>
<dbReference type="STRING" id="3702.Q9C9A2"/>
<dbReference type="iPTMnet" id="Q9C9A2"/>
<dbReference type="PaxDb" id="3702-AT1G71060.1"/>
<dbReference type="ProteomicsDB" id="249060"/>
<dbReference type="EnsemblPlants" id="AT1G71060.1">
    <property type="protein sequence ID" value="AT1G71060.1"/>
    <property type="gene ID" value="AT1G71060"/>
</dbReference>
<dbReference type="GeneID" id="843446"/>
<dbReference type="Gramene" id="AT1G71060.1">
    <property type="protein sequence ID" value="AT1G71060.1"/>
    <property type="gene ID" value="AT1G71060"/>
</dbReference>
<dbReference type="KEGG" id="ath:AT1G71060"/>
<dbReference type="Araport" id="AT1G71060"/>
<dbReference type="TAIR" id="AT1G71060"/>
<dbReference type="eggNOG" id="KOG4197">
    <property type="taxonomic scope" value="Eukaryota"/>
</dbReference>
<dbReference type="HOGENOM" id="CLU_002706_49_20_1"/>
<dbReference type="InParanoid" id="Q9C9A2"/>
<dbReference type="OMA" id="DACKYFQ"/>
<dbReference type="PhylomeDB" id="Q9C9A2"/>
<dbReference type="PRO" id="PR:Q9C9A2"/>
<dbReference type="Proteomes" id="UP000006548">
    <property type="component" value="Chromosome 1"/>
</dbReference>
<dbReference type="ExpressionAtlas" id="Q9C9A2">
    <property type="expression patterns" value="baseline and differential"/>
</dbReference>
<dbReference type="GO" id="GO:0005739">
    <property type="term" value="C:mitochondrion"/>
    <property type="evidence" value="ECO:0007669"/>
    <property type="project" value="UniProtKB-SubCell"/>
</dbReference>
<dbReference type="Gene3D" id="1.25.40.10">
    <property type="entry name" value="Tetratricopeptide repeat domain"/>
    <property type="match status" value="3"/>
</dbReference>
<dbReference type="InterPro" id="IPR051114">
    <property type="entry name" value="Mito_RNA_Proc_CCM1"/>
</dbReference>
<dbReference type="InterPro" id="IPR002885">
    <property type="entry name" value="Pentatricopeptide_rpt"/>
</dbReference>
<dbReference type="InterPro" id="IPR011990">
    <property type="entry name" value="TPR-like_helical_dom_sf"/>
</dbReference>
<dbReference type="NCBIfam" id="TIGR00756">
    <property type="entry name" value="PPR"/>
    <property type="match status" value="7"/>
</dbReference>
<dbReference type="PANTHER" id="PTHR47934:SF6">
    <property type="entry name" value="MITOCHONDRIAL GROUP I INTRON SPLICING FACTOR CCM1-RELATED"/>
    <property type="match status" value="1"/>
</dbReference>
<dbReference type="PANTHER" id="PTHR47934">
    <property type="entry name" value="PENTATRICOPEPTIDE REPEAT-CONTAINING PROTEIN PET309, MITOCHONDRIAL"/>
    <property type="match status" value="1"/>
</dbReference>
<dbReference type="Pfam" id="PF01535">
    <property type="entry name" value="PPR"/>
    <property type="match status" value="2"/>
</dbReference>
<dbReference type="Pfam" id="PF13041">
    <property type="entry name" value="PPR_2"/>
    <property type="match status" value="4"/>
</dbReference>
<dbReference type="SUPFAM" id="SSF81901">
    <property type="entry name" value="HCP-like"/>
    <property type="match status" value="1"/>
</dbReference>
<dbReference type="PROSITE" id="PS51375">
    <property type="entry name" value="PPR"/>
    <property type="match status" value="10"/>
</dbReference>
<organism>
    <name type="scientific">Arabidopsis thaliana</name>
    <name type="common">Mouse-ear cress</name>
    <dbReference type="NCBI Taxonomy" id="3702"/>
    <lineage>
        <taxon>Eukaryota</taxon>
        <taxon>Viridiplantae</taxon>
        <taxon>Streptophyta</taxon>
        <taxon>Embryophyta</taxon>
        <taxon>Tracheophyta</taxon>
        <taxon>Spermatophyta</taxon>
        <taxon>Magnoliopsida</taxon>
        <taxon>eudicotyledons</taxon>
        <taxon>Gunneridae</taxon>
        <taxon>Pentapetalae</taxon>
        <taxon>rosids</taxon>
        <taxon>malvids</taxon>
        <taxon>Brassicales</taxon>
        <taxon>Brassicaceae</taxon>
        <taxon>Camelineae</taxon>
        <taxon>Arabidopsis</taxon>
    </lineage>
</organism>
<evidence type="ECO:0000255" key="1"/>
<evidence type="ECO:0000305" key="2"/>
<name>PP112_ARATH</name>
<proteinExistence type="evidence at transcript level"/>
<comment type="subcellular location">
    <subcellularLocation>
        <location evidence="2">Mitochondrion</location>
    </subcellularLocation>
</comment>
<comment type="similarity">
    <text evidence="2">Belongs to the PPR family. P subfamily.</text>
</comment>
<comment type="online information" name="Pentatricopeptide repeat proteins">
    <link uri="https://ppr.plantenergy.uwa.edu.au"/>
</comment>
<accession>Q9C9A2</accession>
<gene>
    <name type="ordered locus">At1g71060</name>
    <name type="ORF">F23N20.5</name>
</gene>
<reference key="1">
    <citation type="journal article" date="2000" name="Nature">
        <title>Sequence and analysis of chromosome 1 of the plant Arabidopsis thaliana.</title>
        <authorList>
            <person name="Theologis A."/>
            <person name="Ecker J.R."/>
            <person name="Palm C.J."/>
            <person name="Federspiel N.A."/>
            <person name="Kaul S."/>
            <person name="White O."/>
            <person name="Alonso J."/>
            <person name="Altafi H."/>
            <person name="Araujo R."/>
            <person name="Bowman C.L."/>
            <person name="Brooks S.Y."/>
            <person name="Buehler E."/>
            <person name="Chan A."/>
            <person name="Chao Q."/>
            <person name="Chen H."/>
            <person name="Cheuk R.F."/>
            <person name="Chin C.W."/>
            <person name="Chung M.K."/>
            <person name="Conn L."/>
            <person name="Conway A.B."/>
            <person name="Conway A.R."/>
            <person name="Creasy T.H."/>
            <person name="Dewar K."/>
            <person name="Dunn P."/>
            <person name="Etgu P."/>
            <person name="Feldblyum T.V."/>
            <person name="Feng J.-D."/>
            <person name="Fong B."/>
            <person name="Fujii C.Y."/>
            <person name="Gill J.E."/>
            <person name="Goldsmith A.D."/>
            <person name="Haas B."/>
            <person name="Hansen N.F."/>
            <person name="Hughes B."/>
            <person name="Huizar L."/>
            <person name="Hunter J.L."/>
            <person name="Jenkins J."/>
            <person name="Johnson-Hopson C."/>
            <person name="Khan S."/>
            <person name="Khaykin E."/>
            <person name="Kim C.J."/>
            <person name="Koo H.L."/>
            <person name="Kremenetskaia I."/>
            <person name="Kurtz D.B."/>
            <person name="Kwan A."/>
            <person name="Lam B."/>
            <person name="Langin-Hooper S."/>
            <person name="Lee A."/>
            <person name="Lee J.M."/>
            <person name="Lenz C.A."/>
            <person name="Li J.H."/>
            <person name="Li Y.-P."/>
            <person name="Lin X."/>
            <person name="Liu S.X."/>
            <person name="Liu Z.A."/>
            <person name="Luros J.S."/>
            <person name="Maiti R."/>
            <person name="Marziali A."/>
            <person name="Militscher J."/>
            <person name="Miranda M."/>
            <person name="Nguyen M."/>
            <person name="Nierman W.C."/>
            <person name="Osborne B.I."/>
            <person name="Pai G."/>
            <person name="Peterson J."/>
            <person name="Pham P.K."/>
            <person name="Rizzo M."/>
            <person name="Rooney T."/>
            <person name="Rowley D."/>
            <person name="Sakano H."/>
            <person name="Salzberg S.L."/>
            <person name="Schwartz J.R."/>
            <person name="Shinn P."/>
            <person name="Southwick A.M."/>
            <person name="Sun H."/>
            <person name="Tallon L.J."/>
            <person name="Tambunga G."/>
            <person name="Toriumi M.J."/>
            <person name="Town C.D."/>
            <person name="Utterback T."/>
            <person name="Van Aken S."/>
            <person name="Vaysberg M."/>
            <person name="Vysotskaia V.S."/>
            <person name="Walker M."/>
            <person name="Wu D."/>
            <person name="Yu G."/>
            <person name="Fraser C.M."/>
            <person name="Venter J.C."/>
            <person name="Davis R.W."/>
        </authorList>
    </citation>
    <scope>NUCLEOTIDE SEQUENCE [LARGE SCALE GENOMIC DNA]</scope>
    <source>
        <strain>cv. Columbia</strain>
    </source>
</reference>
<reference key="2">
    <citation type="journal article" date="2017" name="Plant J.">
        <title>Araport11: a complete reannotation of the Arabidopsis thaliana reference genome.</title>
        <authorList>
            <person name="Cheng C.Y."/>
            <person name="Krishnakumar V."/>
            <person name="Chan A.P."/>
            <person name="Thibaud-Nissen F."/>
            <person name="Schobel S."/>
            <person name="Town C.D."/>
        </authorList>
    </citation>
    <scope>GENOME REANNOTATION</scope>
    <source>
        <strain>cv. Columbia</strain>
    </source>
</reference>
<reference key="3">
    <citation type="journal article" date="2004" name="Plant Cell">
        <title>Genome-wide analysis of Arabidopsis pentatricopeptide repeat proteins reveals their essential role in organelle biogenesis.</title>
        <authorList>
            <person name="Lurin C."/>
            <person name="Andres C."/>
            <person name="Aubourg S."/>
            <person name="Bellaoui M."/>
            <person name="Bitton F."/>
            <person name="Bruyere C."/>
            <person name="Caboche M."/>
            <person name="Debast C."/>
            <person name="Gualberto J."/>
            <person name="Hoffmann B."/>
            <person name="Lecharny A."/>
            <person name="Le Ret M."/>
            <person name="Martin-Magniette M.-L."/>
            <person name="Mireau H."/>
            <person name="Peeters N."/>
            <person name="Renou J.-P."/>
            <person name="Szurek B."/>
            <person name="Taconnat L."/>
            <person name="Small I."/>
        </authorList>
    </citation>
    <scope>GENE FAMILY</scope>
</reference>
<sequence>MVFSRFFRVTGVNLSRRVYSRISSSSSPSLESIPWIHKASNFTLYGSFHASSVETQVSANDASQDAERICKILTKFTDSKVETLLNEASVKLSPALIEEVLKKLSNAGVLALSVFKWAENQKGFKHTTSNYNALIESLGKIKQFKLIWSLVDDMKAKKLLSKETFALISRRYARARKVKEAIGAFHKMEEFGFKMESSDFNRMLDTLSKSRNVGDAQKVFDKMKKKRFEPDIKSYTILLEGWGQELNLLRVDEVNREMKDEGFEPDVVAYGIIINAHCKAKKYEEAIRFFNEMEQRNCKPSPHIFCSLINGLGSEKKLNDALEFFERSKSSGFPLEAPTYNALVGAYCWSQRMEDAYKTVDEMRLKGVGPNARTYDIILHHLIRMQRSKEAYEVYQTMSCEPTVSTYEIMVRMFCNKERLDMAIKIWDEMKGKGVLPGMHMFSSLITALCHENKLDEACEYFNEMLDVGIRPPGHMFSRLKQTLLDEGRKDKVTDLVVKMDRLRKTQLVG</sequence>
<feature type="transit peptide" description="Mitochondrion" evidence="1">
    <location>
        <begin position="1"/>
        <end position="14"/>
    </location>
</feature>
<feature type="chain" id="PRO_0000342853" description="Pentatricopeptide repeat-containing protein At1g71060, mitochondrial">
    <location>
        <begin position="15"/>
        <end position="510"/>
    </location>
</feature>
<feature type="repeat" description="PPR 1">
    <location>
        <begin position="127"/>
        <end position="157"/>
    </location>
</feature>
<feature type="repeat" description="PPR 2">
    <location>
        <begin position="161"/>
        <end position="195"/>
    </location>
</feature>
<feature type="repeat" description="PPR 3">
    <location>
        <begin position="196"/>
        <end position="230"/>
    </location>
</feature>
<feature type="repeat" description="PPR 4">
    <location>
        <begin position="231"/>
        <end position="265"/>
    </location>
</feature>
<feature type="repeat" description="PPR 5">
    <location>
        <begin position="266"/>
        <end position="300"/>
    </location>
</feature>
<feature type="repeat" description="PPR 6">
    <location>
        <begin position="301"/>
        <end position="335"/>
    </location>
</feature>
<feature type="repeat" description="PPR 7">
    <location>
        <begin position="336"/>
        <end position="370"/>
    </location>
</feature>
<feature type="repeat" description="PPR 8">
    <location>
        <begin position="371"/>
        <end position="401"/>
    </location>
</feature>
<feature type="repeat" description="PPR 9">
    <location>
        <begin position="403"/>
        <end position="437"/>
    </location>
</feature>
<feature type="repeat" description="PPR 10">
    <location>
        <begin position="438"/>
        <end position="472"/>
    </location>
</feature>